<proteinExistence type="inferred from homology"/>
<sequence>MRTTYMAKPGEVERKWYVIDATDIALGRLSTVVASILRGKNKPTFTPNVDTGDNIIVINAEKIKLTGRKATDKLYHHHSNHPGGLKTRTAGEIRENNPERLIEMSVKGMLPKNSLGHNQFLKLHVYAGGEHKHQAQNPEVLDITDII</sequence>
<feature type="chain" id="PRO_0000261737" description="Large ribosomal subunit protein uL13">
    <location>
        <begin position="1"/>
        <end position="147"/>
    </location>
</feature>
<protein>
    <recommendedName>
        <fullName evidence="1">Large ribosomal subunit protein uL13</fullName>
    </recommendedName>
    <alternativeName>
        <fullName evidence="2">50S ribosomal protein L13</fullName>
    </alternativeName>
</protein>
<organism>
    <name type="scientific">Latilactobacillus sakei subsp. sakei (strain 23K)</name>
    <name type="common">Lactobacillus sakei subsp. sakei</name>
    <dbReference type="NCBI Taxonomy" id="314315"/>
    <lineage>
        <taxon>Bacteria</taxon>
        <taxon>Bacillati</taxon>
        <taxon>Bacillota</taxon>
        <taxon>Bacilli</taxon>
        <taxon>Lactobacillales</taxon>
        <taxon>Lactobacillaceae</taxon>
        <taxon>Latilactobacillus</taxon>
    </lineage>
</organism>
<accession>Q38UV4</accession>
<keyword id="KW-1185">Reference proteome</keyword>
<keyword id="KW-0687">Ribonucleoprotein</keyword>
<keyword id="KW-0689">Ribosomal protein</keyword>
<reference key="1">
    <citation type="journal article" date="2005" name="Nat. Biotechnol.">
        <title>The complete genome sequence of the meat-borne lactic acid bacterium Lactobacillus sakei 23K.</title>
        <authorList>
            <person name="Chaillou S."/>
            <person name="Champomier-Verges M.-C."/>
            <person name="Cornet M."/>
            <person name="Crutz-Le Coq A.-M."/>
            <person name="Dudez A.-M."/>
            <person name="Martin V."/>
            <person name="Beaufils S."/>
            <person name="Darbon-Rongere E."/>
            <person name="Bossy R."/>
            <person name="Loux V."/>
            <person name="Zagorec M."/>
        </authorList>
    </citation>
    <scope>NUCLEOTIDE SEQUENCE [LARGE SCALE GENOMIC DNA]</scope>
    <source>
        <strain>23K</strain>
    </source>
</reference>
<dbReference type="EMBL" id="CR936503">
    <property type="protein sequence ID" value="CAI56030.1"/>
    <property type="molecule type" value="Genomic_DNA"/>
</dbReference>
<dbReference type="RefSeq" id="WP_011375413.1">
    <property type="nucleotide sequence ID" value="NC_007576.1"/>
</dbReference>
<dbReference type="SMR" id="Q38UV4"/>
<dbReference type="STRING" id="314315.LCA_1722"/>
<dbReference type="GeneID" id="57132642"/>
<dbReference type="KEGG" id="lsa:LCA_1722"/>
<dbReference type="eggNOG" id="COG0102">
    <property type="taxonomic scope" value="Bacteria"/>
</dbReference>
<dbReference type="HOGENOM" id="CLU_082184_2_2_9"/>
<dbReference type="OrthoDB" id="9801330at2"/>
<dbReference type="Proteomes" id="UP000002707">
    <property type="component" value="Chromosome"/>
</dbReference>
<dbReference type="GO" id="GO:0022625">
    <property type="term" value="C:cytosolic large ribosomal subunit"/>
    <property type="evidence" value="ECO:0007669"/>
    <property type="project" value="TreeGrafter"/>
</dbReference>
<dbReference type="GO" id="GO:0003729">
    <property type="term" value="F:mRNA binding"/>
    <property type="evidence" value="ECO:0007669"/>
    <property type="project" value="TreeGrafter"/>
</dbReference>
<dbReference type="GO" id="GO:0003735">
    <property type="term" value="F:structural constituent of ribosome"/>
    <property type="evidence" value="ECO:0007669"/>
    <property type="project" value="InterPro"/>
</dbReference>
<dbReference type="GO" id="GO:0017148">
    <property type="term" value="P:negative regulation of translation"/>
    <property type="evidence" value="ECO:0007669"/>
    <property type="project" value="TreeGrafter"/>
</dbReference>
<dbReference type="GO" id="GO:0006412">
    <property type="term" value="P:translation"/>
    <property type="evidence" value="ECO:0007669"/>
    <property type="project" value="UniProtKB-UniRule"/>
</dbReference>
<dbReference type="CDD" id="cd00392">
    <property type="entry name" value="Ribosomal_L13"/>
    <property type="match status" value="1"/>
</dbReference>
<dbReference type="FunFam" id="3.90.1180.10:FF:000001">
    <property type="entry name" value="50S ribosomal protein L13"/>
    <property type="match status" value="1"/>
</dbReference>
<dbReference type="Gene3D" id="3.90.1180.10">
    <property type="entry name" value="Ribosomal protein L13"/>
    <property type="match status" value="1"/>
</dbReference>
<dbReference type="HAMAP" id="MF_01366">
    <property type="entry name" value="Ribosomal_uL13"/>
    <property type="match status" value="1"/>
</dbReference>
<dbReference type="InterPro" id="IPR005822">
    <property type="entry name" value="Ribosomal_uL13"/>
</dbReference>
<dbReference type="InterPro" id="IPR005823">
    <property type="entry name" value="Ribosomal_uL13_bac-type"/>
</dbReference>
<dbReference type="InterPro" id="IPR023563">
    <property type="entry name" value="Ribosomal_uL13_CS"/>
</dbReference>
<dbReference type="InterPro" id="IPR036899">
    <property type="entry name" value="Ribosomal_uL13_sf"/>
</dbReference>
<dbReference type="NCBIfam" id="TIGR01066">
    <property type="entry name" value="rplM_bact"/>
    <property type="match status" value="1"/>
</dbReference>
<dbReference type="PANTHER" id="PTHR11545:SF2">
    <property type="entry name" value="LARGE RIBOSOMAL SUBUNIT PROTEIN UL13M"/>
    <property type="match status" value="1"/>
</dbReference>
<dbReference type="PANTHER" id="PTHR11545">
    <property type="entry name" value="RIBOSOMAL PROTEIN L13"/>
    <property type="match status" value="1"/>
</dbReference>
<dbReference type="Pfam" id="PF00572">
    <property type="entry name" value="Ribosomal_L13"/>
    <property type="match status" value="1"/>
</dbReference>
<dbReference type="PIRSF" id="PIRSF002181">
    <property type="entry name" value="Ribosomal_L13"/>
    <property type="match status" value="1"/>
</dbReference>
<dbReference type="SUPFAM" id="SSF52161">
    <property type="entry name" value="Ribosomal protein L13"/>
    <property type="match status" value="1"/>
</dbReference>
<dbReference type="PROSITE" id="PS00783">
    <property type="entry name" value="RIBOSOMAL_L13"/>
    <property type="match status" value="1"/>
</dbReference>
<gene>
    <name evidence="1" type="primary">rplM</name>
    <name type="ordered locus">LCA_1722</name>
</gene>
<evidence type="ECO:0000255" key="1">
    <source>
        <dbReference type="HAMAP-Rule" id="MF_01366"/>
    </source>
</evidence>
<evidence type="ECO:0000305" key="2"/>
<name>RL13_LATSS</name>
<comment type="function">
    <text evidence="1">This protein is one of the early assembly proteins of the 50S ribosomal subunit, although it is not seen to bind rRNA by itself. It is important during the early stages of 50S assembly.</text>
</comment>
<comment type="subunit">
    <text evidence="1">Part of the 50S ribosomal subunit.</text>
</comment>
<comment type="similarity">
    <text evidence="1">Belongs to the universal ribosomal protein uL13 family.</text>
</comment>